<evidence type="ECO:0000250" key="1">
    <source>
        <dbReference type="UniProtKB" id="O25560"/>
    </source>
</evidence>
<evidence type="ECO:0000250" key="2">
    <source>
        <dbReference type="UniProtKB" id="P0AAN3"/>
    </source>
</evidence>
<evidence type="ECO:0000269" key="3">
    <source>
    </source>
</evidence>
<evidence type="ECO:0000305" key="4"/>
<organism>
    <name type="scientific">Helicobacter hepaticus (strain ATCC 51449 / 3B1)</name>
    <dbReference type="NCBI Taxonomy" id="235279"/>
    <lineage>
        <taxon>Bacteria</taxon>
        <taxon>Pseudomonadati</taxon>
        <taxon>Campylobacterota</taxon>
        <taxon>Epsilonproteobacteria</taxon>
        <taxon>Campylobacterales</taxon>
        <taxon>Helicobacteraceae</taxon>
        <taxon>Helicobacter</taxon>
    </lineage>
</organism>
<proteinExistence type="inferred from homology"/>
<sequence>MNLSRNERLENNPNLNKKSIQIVSKILSQNDLKAQELREKYKQLGVYVINLMSSPGSGKTTLLESLSAFKDFTFCVLEGDLQTNRDAQRLEAKGVSAYQITTGEACHLEASMIETALCELQKQCDMQQMDYLFIENVGNLVCPASYDVGASLNIVLLSTPEGDDKILKYPTMFMCADAVIVSKADMMQYFGFSLTRVKEDLGQLKANVPLFLTSNKERESIAKVRDFIEQKRAQNYQSHHQF</sequence>
<feature type="chain" id="PRO_0000372090" description="Hydrogenase/urease maturation factor HypB">
    <location>
        <begin position="1"/>
        <end position="242"/>
    </location>
</feature>
<feature type="region of interest" description="G-domain" evidence="2">
    <location>
        <begin position="48"/>
        <end position="211"/>
    </location>
</feature>
<feature type="binding site" evidence="1">
    <location>
        <position position="106"/>
    </location>
    <ligand>
        <name>Ni(2+)</name>
        <dbReference type="ChEBI" id="CHEBI:49786"/>
    </ligand>
</feature>
<feature type="binding site" evidence="1">
    <location>
        <position position="106"/>
    </location>
    <ligand>
        <name>Zn(2+)</name>
        <dbReference type="ChEBI" id="CHEBI:29105"/>
    </ligand>
</feature>
<feature type="binding site" evidence="1">
    <location>
        <position position="107"/>
    </location>
    <ligand>
        <name>Ni(2+)</name>
        <dbReference type="ChEBI" id="CHEBI:49786"/>
    </ligand>
</feature>
<feature type="binding site" evidence="1">
    <location>
        <position position="142"/>
    </location>
    <ligand>
        <name>Ni(2+)</name>
        <dbReference type="ChEBI" id="CHEBI:49786"/>
    </ligand>
</feature>
<feature type="binding site" evidence="1">
    <location>
        <position position="142"/>
    </location>
    <ligand>
        <name>Zn(2+)</name>
        <dbReference type="ChEBI" id="CHEBI:29105"/>
    </ligand>
</feature>
<comment type="function">
    <text evidence="2">Involved in the maturation of [NiFe] hydrogenases. Required for nickel insertion into the metal center of the hydrogenase. Exhibits a low intrinsic GTPase activity, which is essential for nickel insertion.</text>
</comment>
<comment type="disruption phenotype">
    <text evidence="3">Strains missing this gene do not produce hydrogenase or urease; addition of Ni(2+) to cell cultures compensates only poorly for this loss of function. Normal amounts of apo-urease are produced by the cells.</text>
</comment>
<comment type="similarity">
    <text evidence="4">Belongs to the SIMIBI class G3E GTPase family. HypB/HupM subfamily.</text>
</comment>
<dbReference type="EMBL" id="AE017125">
    <property type="protein sequence ID" value="AAP76922.1"/>
    <property type="molecule type" value="Genomic_DNA"/>
</dbReference>
<dbReference type="RefSeq" id="WP_011115168.1">
    <property type="nucleotide sequence ID" value="NC_004917.1"/>
</dbReference>
<dbReference type="SMR" id="Q7VJB8"/>
<dbReference type="STRING" id="235279.HH_0325"/>
<dbReference type="KEGG" id="hhe:HH_0325"/>
<dbReference type="eggNOG" id="COG0378">
    <property type="taxonomic scope" value="Bacteria"/>
</dbReference>
<dbReference type="HOGENOM" id="CLU_056148_0_1_7"/>
<dbReference type="OrthoDB" id="9802035at2"/>
<dbReference type="Proteomes" id="UP000002495">
    <property type="component" value="Chromosome"/>
</dbReference>
<dbReference type="GO" id="GO:0005525">
    <property type="term" value="F:GTP binding"/>
    <property type="evidence" value="ECO:0007669"/>
    <property type="project" value="UniProtKB-KW"/>
</dbReference>
<dbReference type="GO" id="GO:0003924">
    <property type="term" value="F:GTPase activity"/>
    <property type="evidence" value="ECO:0007669"/>
    <property type="project" value="InterPro"/>
</dbReference>
<dbReference type="GO" id="GO:0016151">
    <property type="term" value="F:nickel cation binding"/>
    <property type="evidence" value="ECO:0007669"/>
    <property type="project" value="InterPro"/>
</dbReference>
<dbReference type="GO" id="GO:0008270">
    <property type="term" value="F:zinc ion binding"/>
    <property type="evidence" value="ECO:0007669"/>
    <property type="project" value="TreeGrafter"/>
</dbReference>
<dbReference type="GO" id="GO:0051604">
    <property type="term" value="P:protein maturation"/>
    <property type="evidence" value="ECO:0007669"/>
    <property type="project" value="InterPro"/>
</dbReference>
<dbReference type="Gene3D" id="3.40.50.300">
    <property type="entry name" value="P-loop containing nucleotide triphosphate hydrolases"/>
    <property type="match status" value="1"/>
</dbReference>
<dbReference type="InterPro" id="IPR003495">
    <property type="entry name" value="CobW/HypB/UreG_nucleotide-bd"/>
</dbReference>
<dbReference type="InterPro" id="IPR004392">
    <property type="entry name" value="Hyd_mat_HypB"/>
</dbReference>
<dbReference type="InterPro" id="IPR027417">
    <property type="entry name" value="P-loop_NTPase"/>
</dbReference>
<dbReference type="NCBIfam" id="TIGR00073">
    <property type="entry name" value="hypB"/>
    <property type="match status" value="1"/>
</dbReference>
<dbReference type="PANTHER" id="PTHR30134:SF2">
    <property type="entry name" value="HYDROGENASE MATURATION FACTOR HYPB"/>
    <property type="match status" value="1"/>
</dbReference>
<dbReference type="PANTHER" id="PTHR30134">
    <property type="entry name" value="HYDROGENASE PROTEIN ASSEMBLY PROTEIN, NICKEL CHAPERONE"/>
    <property type="match status" value="1"/>
</dbReference>
<dbReference type="Pfam" id="PF02492">
    <property type="entry name" value="cobW"/>
    <property type="match status" value="1"/>
</dbReference>
<dbReference type="PIRSF" id="PIRSF005624">
    <property type="entry name" value="Ni-bind_GTPase"/>
    <property type="match status" value="1"/>
</dbReference>
<dbReference type="SUPFAM" id="SSF52540">
    <property type="entry name" value="P-loop containing nucleoside triphosphate hydrolases"/>
    <property type="match status" value="1"/>
</dbReference>
<gene>
    <name type="primary">hypB</name>
    <name type="ordered locus">HH_0325</name>
</gene>
<name>HYPB_HELHP</name>
<accession>Q7VJB8</accession>
<protein>
    <recommendedName>
        <fullName evidence="1">Hydrogenase/urease maturation factor HypB</fullName>
    </recommendedName>
</protein>
<keyword id="KW-0342">GTP-binding</keyword>
<keyword id="KW-0378">Hydrolase</keyword>
<keyword id="KW-0479">Metal-binding</keyword>
<keyword id="KW-0533">Nickel</keyword>
<keyword id="KW-0996">Nickel insertion</keyword>
<keyword id="KW-0547">Nucleotide-binding</keyword>
<keyword id="KW-1185">Reference proteome</keyword>
<keyword id="KW-0862">Zinc</keyword>
<reference key="1">
    <citation type="journal article" date="2003" name="Proc. Natl. Acad. Sci. U.S.A.">
        <title>The complete genome sequence of the carcinogenic bacterium Helicobacter hepaticus.</title>
        <authorList>
            <person name="Suerbaum S."/>
            <person name="Josenhans C."/>
            <person name="Sterzenbach T."/>
            <person name="Drescher B."/>
            <person name="Brandt P."/>
            <person name="Bell M."/>
            <person name="Droege M."/>
            <person name="Fartmann B."/>
            <person name="Fischer H.-P."/>
            <person name="Ge Z."/>
            <person name="Hoerster A."/>
            <person name="Holland R."/>
            <person name="Klein K."/>
            <person name="Koenig J."/>
            <person name="Macko L."/>
            <person name="Mendz G.L."/>
            <person name="Nyakatura G."/>
            <person name="Schauer D.B."/>
            <person name="Shen Z."/>
            <person name="Weber J."/>
            <person name="Frosch M."/>
            <person name="Fox J.G."/>
        </authorList>
    </citation>
    <scope>NUCLEOTIDE SEQUENCE [LARGE SCALE GENOMIC DNA]</scope>
    <source>
        <strain>ATCC 51449 / 3B1</strain>
    </source>
</reference>
<reference key="2">
    <citation type="journal article" date="2007" name="Microbiology">
        <title>Nickel enzyme maturation in Helicobacter hepaticus: roles of accessory proteins in hydrogenase and urease activities.</title>
        <authorList>
            <person name="Benoit S.L."/>
            <person name="Zbell A.L."/>
            <person name="Maier R.J."/>
        </authorList>
    </citation>
    <scope>DISRUPTION PHENOTYPE</scope>
    <source>
        <strain>ATCC 51449 / 3B1</strain>
    </source>
</reference>